<organism evidence="8">
    <name type="scientific">Arabidopsis thaliana</name>
    <name type="common">Mouse-ear cress</name>
    <dbReference type="NCBI Taxonomy" id="3702"/>
    <lineage>
        <taxon>Eukaryota</taxon>
        <taxon>Viridiplantae</taxon>
        <taxon>Streptophyta</taxon>
        <taxon>Embryophyta</taxon>
        <taxon>Tracheophyta</taxon>
        <taxon>Spermatophyta</taxon>
        <taxon>Magnoliopsida</taxon>
        <taxon>eudicotyledons</taxon>
        <taxon>Gunneridae</taxon>
        <taxon>Pentapetalae</taxon>
        <taxon>rosids</taxon>
        <taxon>malvids</taxon>
        <taxon>Brassicales</taxon>
        <taxon>Brassicaceae</taxon>
        <taxon>Camelineae</taxon>
        <taxon>Arabidopsis</taxon>
    </lineage>
</organism>
<accession>Q9LTY1</accession>
<dbReference type="EMBL" id="AB024032">
    <property type="protein sequence ID" value="BAA97009.1"/>
    <property type="molecule type" value="Genomic_DNA"/>
</dbReference>
<dbReference type="EMBL" id="CP002688">
    <property type="protein sequence ID" value="AED95867.1"/>
    <property type="molecule type" value="Genomic_DNA"/>
</dbReference>
<dbReference type="RefSeq" id="NP_199799.1">
    <property type="nucleotide sequence ID" value="NM_124366.4"/>
</dbReference>
<dbReference type="SMR" id="Q9LTY1"/>
<dbReference type="BioGRID" id="20297">
    <property type="interactions" value="5"/>
</dbReference>
<dbReference type="FunCoup" id="Q9LTY1">
    <property type="interactions" value="3214"/>
</dbReference>
<dbReference type="STRING" id="3702.Q9LTY1"/>
<dbReference type="iPTMnet" id="Q9LTY1"/>
<dbReference type="PaxDb" id="3702-AT5G49880.1"/>
<dbReference type="ProteomicsDB" id="238646"/>
<dbReference type="EnsemblPlants" id="AT5G49880.1">
    <property type="protein sequence ID" value="AT5G49880.1"/>
    <property type="gene ID" value="AT5G49880"/>
</dbReference>
<dbReference type="GeneID" id="835051"/>
<dbReference type="Gramene" id="AT5G49880.1">
    <property type="protein sequence ID" value="AT5G49880.1"/>
    <property type="gene ID" value="AT5G49880"/>
</dbReference>
<dbReference type="KEGG" id="ath:AT5G49880"/>
<dbReference type="Araport" id="AT5G49880"/>
<dbReference type="TAIR" id="AT5G49880">
    <property type="gene designation" value="MAD1"/>
</dbReference>
<dbReference type="eggNOG" id="KOG4593">
    <property type="taxonomic scope" value="Eukaryota"/>
</dbReference>
<dbReference type="HOGENOM" id="CLU_023152_0_0_1"/>
<dbReference type="InParanoid" id="Q9LTY1"/>
<dbReference type="OMA" id="YKLDFMP"/>
<dbReference type="PhylomeDB" id="Q9LTY1"/>
<dbReference type="PRO" id="PR:Q9LTY1"/>
<dbReference type="Proteomes" id="UP000006548">
    <property type="component" value="Chromosome 5"/>
</dbReference>
<dbReference type="ExpressionAtlas" id="Q9LTY1">
    <property type="expression patterns" value="baseline and differential"/>
</dbReference>
<dbReference type="GO" id="GO:0005635">
    <property type="term" value="C:nuclear envelope"/>
    <property type="evidence" value="ECO:0000314"/>
    <property type="project" value="TAIR"/>
</dbReference>
<dbReference type="GO" id="GO:0051301">
    <property type="term" value="P:cell division"/>
    <property type="evidence" value="ECO:0007669"/>
    <property type="project" value="UniProtKB-KW"/>
</dbReference>
<dbReference type="GO" id="GO:0007094">
    <property type="term" value="P:mitotic spindle assembly checkpoint signaling"/>
    <property type="evidence" value="ECO:0007669"/>
    <property type="project" value="InterPro"/>
</dbReference>
<dbReference type="FunFam" id="3.30.457.60:FF:000004">
    <property type="entry name" value="Mitotic spindle checkpoint protein MAD1"/>
    <property type="match status" value="1"/>
</dbReference>
<dbReference type="Gene3D" id="3.30.457.60">
    <property type="match status" value="1"/>
</dbReference>
<dbReference type="Gene3D" id="6.10.250.90">
    <property type="match status" value="1"/>
</dbReference>
<dbReference type="InterPro" id="IPR008672">
    <property type="entry name" value="Mad1"/>
</dbReference>
<dbReference type="PANTHER" id="PTHR23168:SF0">
    <property type="entry name" value="MITOTIC SPINDLE ASSEMBLY CHECKPOINT PROTEIN MAD1"/>
    <property type="match status" value="1"/>
</dbReference>
<dbReference type="PANTHER" id="PTHR23168">
    <property type="entry name" value="MITOTIC SPINDLE ASSEMBLY CHECKPOINT PROTEIN MAD1 MITOTIC ARREST DEFICIENT-LIKE PROTEIN 1"/>
    <property type="match status" value="1"/>
</dbReference>
<dbReference type="Pfam" id="PF05557">
    <property type="entry name" value="MAD"/>
    <property type="match status" value="1"/>
</dbReference>
<dbReference type="SUPFAM" id="SSF75704">
    <property type="entry name" value="Mitotic arrest deficient-like 1, Mad1"/>
    <property type="match status" value="1"/>
</dbReference>
<name>MAD1_ARATH</name>
<proteinExistence type="evidence at protein level"/>
<comment type="function">
    <text evidence="3">Required for the execution of the mitotic checkpoint which monitors the process of kinetochore-spindle attachment and delays the onset of anaphase when this process is not complete. It inhibits the activity of the anaphase promoting complex by sequestering CDC20 until all chromosomes are aligned at the metaphase plate. Required for anchoring MAD2 to the nuclear envelope.</text>
</comment>
<comment type="subunit">
    <text evidence="3">Homodimer. Part of the mitotic checkpoint complex (MCC). Interacts with MAD2 and NUA.</text>
</comment>
<comment type="subcellular location">
    <subcellularLocation>
        <location evidence="3">Nucleus envelope</location>
    </subcellularLocation>
    <text evidence="3">The nucleus envelope association requires the presence of NUA.</text>
</comment>
<comment type="similarity">
    <text evidence="5">Belongs to the MAD1 family.</text>
</comment>
<evidence type="ECO:0000255" key="1"/>
<evidence type="ECO:0000256" key="2">
    <source>
        <dbReference type="SAM" id="MobiDB-lite"/>
    </source>
</evidence>
<evidence type="ECO:0000269" key="3">
    <source>
    </source>
</evidence>
<evidence type="ECO:0000303" key="4">
    <source>
    </source>
</evidence>
<evidence type="ECO:0000305" key="5"/>
<evidence type="ECO:0000312" key="6">
    <source>
        <dbReference type="Araport" id="AT5G49880"/>
    </source>
</evidence>
<evidence type="ECO:0000312" key="7">
    <source>
        <dbReference type="EMBL" id="BAA97009.1"/>
    </source>
</evidence>
<evidence type="ECO:0000312" key="8">
    <source>
        <dbReference type="Proteomes" id="UP000006548"/>
    </source>
</evidence>
<feature type="chain" id="PRO_0000431096" description="Mitotic spindle checkpoint protein MAD1">
    <location>
        <begin position="1"/>
        <end position="726"/>
    </location>
</feature>
<feature type="region of interest" description="Disordered" evidence="2">
    <location>
        <begin position="1"/>
        <end position="30"/>
    </location>
</feature>
<feature type="coiled-coil region" evidence="1">
    <location>
        <begin position="68"/>
        <end position="246"/>
    </location>
</feature>
<feature type="coiled-coil region" evidence="1">
    <location>
        <begin position="272"/>
        <end position="625"/>
    </location>
</feature>
<keyword id="KW-0131">Cell cycle</keyword>
<keyword id="KW-0132">Cell division</keyword>
<keyword id="KW-0175">Coiled coil</keyword>
<keyword id="KW-0498">Mitosis</keyword>
<keyword id="KW-0539">Nucleus</keyword>
<keyword id="KW-1185">Reference proteome</keyword>
<sequence>MILRTPQPKRLRSDAGESPFPTGATGSGNQLIIYEDSPLPAPAPLQTSHDHSADQHLCTYQCRQMVKADVLDALSTAEKQVEESKTKLQTLNANFTEADAERKHFRDKFLYSEQELAAAKAREKMLQEQLLMEINNSQERYTKELQSCHELEVKLQNEMNLRKKAESSAATAEEKAKLLEDKLTQLSGSVDREKKRLNNDIAQLGKEAKLSVARIGADLERMQCRAQNAETESNLLRSQLEHLKLIFDECLQEKTEVDKKLSSFTSEAASSSDNSVLVKHLQEELKRYEAEVREARKLKSRHLDAELLNVNLLEEQSRRERAESELSKFHDLQLSMEKLENELSSWKSLLNDIPGVSCPDDIVMRFSVLQNEVVQSTMKIGEASTRIKQLEETLEAIQLGRQNAVSEAALAKEKSEALKTDVKRIEVMLTLVTEEKEQLKAVVNELRKSNSEGSVSGAADGALIQGFESSLAKKENYIKDLEQDLNQLKDVNNRQRTEIELLNEKLVDEARRNKSLERDSDRLRSEISLLESKLGHGDYSAANTRVLRMVNTLGVENEAKQTIEALQAELQKTKERLQAVEELKSQSGDAGKLVDSHITGKIAQLKEQNATLEKREERYKTVFADRISVFRRACCELFGYKIVMDEHQRPNGIPVTRFTLQSIYAQSDDEKLEFEYESGNTSILNNEYASQGDIAKQIEIFIRKFNSIPAFTANLTMESFNRRTLY</sequence>
<protein>
    <recommendedName>
        <fullName evidence="4">Mitotic spindle checkpoint protein MAD1</fullName>
    </recommendedName>
    <alternativeName>
        <fullName>Mitotic arrest deficient protein 1</fullName>
    </alternativeName>
</protein>
<gene>
    <name evidence="4" type="primary">MAD1</name>
    <name evidence="6" type="ordered locus">At5g49880</name>
    <name evidence="7" type="ORF">K9P8.2</name>
</gene>
<reference key="1">
    <citation type="journal article" date="2000" name="DNA Res.">
        <title>Structural analysis of Arabidopsis thaliana chromosome 5. X. Sequence features of the regions of 3,076,755 bp covered by sixty P1 and TAC clones.</title>
        <authorList>
            <person name="Sato S."/>
            <person name="Nakamura Y."/>
            <person name="Kaneko T."/>
            <person name="Katoh T."/>
            <person name="Asamizu E."/>
            <person name="Kotani H."/>
            <person name="Tabata S."/>
        </authorList>
    </citation>
    <scope>NUCLEOTIDE SEQUENCE [LARGE SCALE GENOMIC DNA]</scope>
    <source>
        <strain>cv. Columbia</strain>
    </source>
</reference>
<reference key="2">
    <citation type="journal article" date="2017" name="Plant J.">
        <title>Araport11: a complete reannotation of the Arabidopsis thaliana reference genome.</title>
        <authorList>
            <person name="Cheng C.Y."/>
            <person name="Krishnakumar V."/>
            <person name="Chan A.P."/>
            <person name="Thibaud-Nissen F."/>
            <person name="Schobel S."/>
            <person name="Town C.D."/>
        </authorList>
    </citation>
    <scope>GENOME REANNOTATION</scope>
    <source>
        <strain>cv. Columbia</strain>
    </source>
</reference>
<reference key="3">
    <citation type="journal article" date="2012" name="Plant Mol. Biol.">
        <title>Functional interaction between the Arabidopsis orthologs of spindle assembly checkpoint proteins MAD1 and MAD2 and the nucleoporin NUA.</title>
        <authorList>
            <person name="Ding D."/>
            <person name="Muthuswamy S."/>
            <person name="Meier I."/>
        </authorList>
    </citation>
    <scope>FUNCTION</scope>
    <scope>INTERACTION WITH NUA AND MAD2</scope>
    <scope>SUBCELLULAR LOCATION</scope>
</reference>